<organism>
    <name type="scientific">Saccharolobus islandicus (strain Y.G.57.14 / Yellowstone #1)</name>
    <name type="common">Sulfolobus islandicus</name>
    <dbReference type="NCBI Taxonomy" id="439386"/>
    <lineage>
        <taxon>Archaea</taxon>
        <taxon>Thermoproteota</taxon>
        <taxon>Thermoprotei</taxon>
        <taxon>Sulfolobales</taxon>
        <taxon>Sulfolobaceae</taxon>
        <taxon>Saccharolobus</taxon>
    </lineage>
</organism>
<proteinExistence type="inferred from homology"/>
<sequence length="265" mass="30214">MSINLLHKDDKRIDLVFEGYPLEFVNAIRRATMLYVPVMSIDDVYFIENNSPLYDEILAHRLALIPFTSEEALDTYRWPEECIECTENCEKCYTKIYIEAEALNEPKMLYSKDIKSEDPSIVPISGDIPIVLLGANQKISLEARLRLGYGKEHAKFIPVSLAIVRYYPKVEILGNCEKAATVCPEGVFELKDGKLSVKNELACTLCEECLRYCNGLIRISSIEDKYILELESVGSLKPERILLEAGKSIIRKIEELEKKLVEVIK</sequence>
<feature type="chain" id="PRO_1000205119" description="DNA-directed RNA polymerase subunit Rpo3">
    <location>
        <begin position="1"/>
        <end position="265"/>
    </location>
</feature>
<feature type="binding site" evidence="1">
    <location>
        <position position="203"/>
    </location>
    <ligand>
        <name>[3Fe-4S] cluster</name>
        <dbReference type="ChEBI" id="CHEBI:21137"/>
    </ligand>
</feature>
<feature type="binding site" evidence="1">
    <location>
        <position position="206"/>
    </location>
    <ligand>
        <name>[3Fe-4S] cluster</name>
        <dbReference type="ChEBI" id="CHEBI:21137"/>
    </ligand>
</feature>
<feature type="binding site" evidence="1">
    <location>
        <position position="209"/>
    </location>
    <ligand>
        <name>[3Fe-4S] cluster</name>
        <dbReference type="ChEBI" id="CHEBI:21137"/>
    </ligand>
</feature>
<accession>C3N8R8</accession>
<keyword id="KW-0003">3Fe-4S</keyword>
<keyword id="KW-0963">Cytoplasm</keyword>
<keyword id="KW-0240">DNA-directed RNA polymerase</keyword>
<keyword id="KW-0408">Iron</keyword>
<keyword id="KW-0411">Iron-sulfur</keyword>
<keyword id="KW-0479">Metal-binding</keyword>
<keyword id="KW-0548">Nucleotidyltransferase</keyword>
<keyword id="KW-0804">Transcription</keyword>
<keyword id="KW-0808">Transferase</keyword>
<gene>
    <name evidence="1" type="primary">rpo3</name>
    <name evidence="1" type="synonym">rpoD</name>
    <name type="ordered locus">YG5714_2174</name>
</gene>
<protein>
    <recommendedName>
        <fullName evidence="1">DNA-directed RNA polymerase subunit Rpo3</fullName>
        <ecNumber evidence="1">2.7.7.6</ecNumber>
    </recommendedName>
    <alternativeName>
        <fullName evidence="1">DNA-directed RNA polymerase subunit D</fullName>
    </alternativeName>
</protein>
<evidence type="ECO:0000255" key="1">
    <source>
        <dbReference type="HAMAP-Rule" id="MF_00320"/>
    </source>
</evidence>
<evidence type="ECO:0000305" key="2"/>
<name>RPO3_SACI7</name>
<reference key="1">
    <citation type="journal article" date="2009" name="Proc. Natl. Acad. Sci. U.S.A.">
        <title>Biogeography of the Sulfolobus islandicus pan-genome.</title>
        <authorList>
            <person name="Reno M.L."/>
            <person name="Held N.L."/>
            <person name="Fields C.J."/>
            <person name="Burke P.V."/>
            <person name="Whitaker R.J."/>
        </authorList>
    </citation>
    <scope>NUCLEOTIDE SEQUENCE [LARGE SCALE GENOMIC DNA]</scope>
    <source>
        <strain>Y.G.57.14 / Yellowstone #1</strain>
    </source>
</reference>
<comment type="function">
    <text evidence="1">DNA-dependent RNA polymerase (RNAP) catalyzes the transcription of DNA into RNA using the four ribonucleoside triphosphates as substrates.</text>
</comment>
<comment type="catalytic activity">
    <reaction evidence="1">
        <text>RNA(n) + a ribonucleoside 5'-triphosphate = RNA(n+1) + diphosphate</text>
        <dbReference type="Rhea" id="RHEA:21248"/>
        <dbReference type="Rhea" id="RHEA-COMP:14527"/>
        <dbReference type="Rhea" id="RHEA-COMP:17342"/>
        <dbReference type="ChEBI" id="CHEBI:33019"/>
        <dbReference type="ChEBI" id="CHEBI:61557"/>
        <dbReference type="ChEBI" id="CHEBI:140395"/>
        <dbReference type="EC" id="2.7.7.6"/>
    </reaction>
</comment>
<comment type="cofactor">
    <cofactor evidence="1">
        <name>[3Fe-4S] cluster</name>
        <dbReference type="ChEBI" id="CHEBI:21137"/>
    </cofactor>
    <text evidence="1">Binds 1 [3Fe-4S] cluster.</text>
</comment>
<comment type="subunit">
    <text evidence="1">Part of the RNA polymerase complex.</text>
</comment>
<comment type="subcellular location">
    <subcellularLocation>
        <location evidence="1">Cytoplasm</location>
    </subcellularLocation>
</comment>
<comment type="similarity">
    <text evidence="1">Belongs to the archaeal Rpo3/eukaryotic RPB3 RNA polymerase subunit family.</text>
</comment>
<comment type="caution">
    <text evidence="2">X-ray crystallography in other archaea shows this protein binds a 3Fe-4S cluster, although a 4Fe-4S cluster has been suggested to be present in this protein.</text>
</comment>
<dbReference type="EC" id="2.7.7.6" evidence="1"/>
<dbReference type="EMBL" id="CP001403">
    <property type="protein sequence ID" value="ACP46423.1"/>
    <property type="molecule type" value="Genomic_DNA"/>
</dbReference>
<dbReference type="RefSeq" id="WP_012714155.1">
    <property type="nucleotide sequence ID" value="NC_012622.1"/>
</dbReference>
<dbReference type="SMR" id="C3N8R8"/>
<dbReference type="KEGG" id="siy:YG5714_2174"/>
<dbReference type="HOGENOM" id="CLU_038421_3_1_2"/>
<dbReference type="Proteomes" id="UP000002308">
    <property type="component" value="Chromosome"/>
</dbReference>
<dbReference type="GO" id="GO:0005737">
    <property type="term" value="C:cytoplasm"/>
    <property type="evidence" value="ECO:0007669"/>
    <property type="project" value="UniProtKB-SubCell"/>
</dbReference>
<dbReference type="GO" id="GO:0000428">
    <property type="term" value="C:DNA-directed RNA polymerase complex"/>
    <property type="evidence" value="ECO:0007669"/>
    <property type="project" value="UniProtKB-KW"/>
</dbReference>
<dbReference type="GO" id="GO:0051538">
    <property type="term" value="F:3 iron, 4 sulfur cluster binding"/>
    <property type="evidence" value="ECO:0007669"/>
    <property type="project" value="UniProtKB-KW"/>
</dbReference>
<dbReference type="GO" id="GO:0003677">
    <property type="term" value="F:DNA binding"/>
    <property type="evidence" value="ECO:0007669"/>
    <property type="project" value="UniProtKB-UniRule"/>
</dbReference>
<dbReference type="GO" id="GO:0003899">
    <property type="term" value="F:DNA-directed RNA polymerase activity"/>
    <property type="evidence" value="ECO:0007669"/>
    <property type="project" value="UniProtKB-UniRule"/>
</dbReference>
<dbReference type="GO" id="GO:0046872">
    <property type="term" value="F:metal ion binding"/>
    <property type="evidence" value="ECO:0007669"/>
    <property type="project" value="UniProtKB-KW"/>
</dbReference>
<dbReference type="GO" id="GO:0046983">
    <property type="term" value="F:protein dimerization activity"/>
    <property type="evidence" value="ECO:0007669"/>
    <property type="project" value="InterPro"/>
</dbReference>
<dbReference type="GO" id="GO:0006351">
    <property type="term" value="P:DNA-templated transcription"/>
    <property type="evidence" value="ECO:0007669"/>
    <property type="project" value="UniProtKB-UniRule"/>
</dbReference>
<dbReference type="CDD" id="cd07030">
    <property type="entry name" value="RNAP_D"/>
    <property type="match status" value="1"/>
</dbReference>
<dbReference type="Gene3D" id="3.30.70.20">
    <property type="match status" value="1"/>
</dbReference>
<dbReference type="Gene3D" id="2.170.120.12">
    <property type="entry name" value="DNA-directed RNA polymerase, insert domain"/>
    <property type="match status" value="1"/>
</dbReference>
<dbReference type="Gene3D" id="3.30.1360.10">
    <property type="entry name" value="RNA polymerase, RBP11-like subunit"/>
    <property type="match status" value="1"/>
</dbReference>
<dbReference type="HAMAP" id="MF_00320">
    <property type="entry name" value="RNApol_arch_Rpo3"/>
    <property type="match status" value="1"/>
</dbReference>
<dbReference type="InterPro" id="IPR001514">
    <property type="entry name" value="DNA-dir_RNA_pol_30-40kDasu_CS"/>
</dbReference>
<dbReference type="InterPro" id="IPR011262">
    <property type="entry name" value="DNA-dir_RNA_pol_insert"/>
</dbReference>
<dbReference type="InterPro" id="IPR011263">
    <property type="entry name" value="DNA-dir_RNA_pol_RpoA/D/Rpb3"/>
</dbReference>
<dbReference type="InterPro" id="IPR036603">
    <property type="entry name" value="RBP11-like"/>
</dbReference>
<dbReference type="InterPro" id="IPR022842">
    <property type="entry name" value="RNAP_Rpo3/Rpb3/RPAC1"/>
</dbReference>
<dbReference type="InterPro" id="IPR036643">
    <property type="entry name" value="RNApol_insert_sf"/>
</dbReference>
<dbReference type="InterPro" id="IPR050518">
    <property type="entry name" value="Rpo3/RPB3_RNA_Pol_subunit"/>
</dbReference>
<dbReference type="NCBIfam" id="NF001988">
    <property type="entry name" value="PRK00783.1"/>
    <property type="match status" value="1"/>
</dbReference>
<dbReference type="PANTHER" id="PTHR11800">
    <property type="entry name" value="DNA-DIRECTED RNA POLYMERASE"/>
    <property type="match status" value="1"/>
</dbReference>
<dbReference type="PANTHER" id="PTHR11800:SF2">
    <property type="entry name" value="DNA-DIRECTED RNA POLYMERASE II SUBUNIT RPB3"/>
    <property type="match status" value="1"/>
</dbReference>
<dbReference type="Pfam" id="PF01000">
    <property type="entry name" value="RNA_pol_A_bac"/>
    <property type="match status" value="1"/>
</dbReference>
<dbReference type="Pfam" id="PF01193">
    <property type="entry name" value="RNA_pol_L"/>
    <property type="match status" value="1"/>
</dbReference>
<dbReference type="SMART" id="SM00662">
    <property type="entry name" value="RPOLD"/>
    <property type="match status" value="1"/>
</dbReference>
<dbReference type="SUPFAM" id="SSF56553">
    <property type="entry name" value="Insert subdomain of RNA polymerase alpha subunit"/>
    <property type="match status" value="1"/>
</dbReference>
<dbReference type="SUPFAM" id="SSF55257">
    <property type="entry name" value="RBP11-like subunits of RNA polymerase"/>
    <property type="match status" value="1"/>
</dbReference>
<dbReference type="PROSITE" id="PS00446">
    <property type="entry name" value="RNA_POL_D_30KD"/>
    <property type="match status" value="1"/>
</dbReference>